<name>YABA_STRPQ</name>
<gene>
    <name evidence="1" type="primary">yabA</name>
    <name type="ordered locus">SPs1566</name>
</gene>
<reference key="1">
    <citation type="journal article" date="2003" name="Genome Res.">
        <title>Genome sequence of an M3 strain of Streptococcus pyogenes reveals a large-scale genomic rearrangement in invasive strains and new insights into phage evolution.</title>
        <authorList>
            <person name="Nakagawa I."/>
            <person name="Kurokawa K."/>
            <person name="Yamashita A."/>
            <person name="Nakata M."/>
            <person name="Tomiyasu Y."/>
            <person name="Okahashi N."/>
            <person name="Kawabata S."/>
            <person name="Yamazaki K."/>
            <person name="Shiba T."/>
            <person name="Yasunaga T."/>
            <person name="Hayashi H."/>
            <person name="Hattori M."/>
            <person name="Hamada S."/>
        </authorList>
    </citation>
    <scope>NUCLEOTIDE SEQUENCE [LARGE SCALE GENOMIC DNA]</scope>
    <source>
        <strain>SSI-1</strain>
    </source>
</reference>
<protein>
    <recommendedName>
        <fullName evidence="1">Replication initiation control protein YabA</fullName>
    </recommendedName>
</protein>
<dbReference type="EMBL" id="BA000034">
    <property type="protein sequence ID" value="BAC64661.1"/>
    <property type="status" value="ALT_INIT"/>
    <property type="molecule type" value="Genomic_DNA"/>
</dbReference>
<dbReference type="RefSeq" id="WP_011054221.1">
    <property type="nucleotide sequence ID" value="NC_004606.1"/>
</dbReference>
<dbReference type="SMR" id="P0DH55"/>
<dbReference type="KEGG" id="sps:SPs1566"/>
<dbReference type="HOGENOM" id="CLU_157169_0_0_9"/>
<dbReference type="GO" id="GO:0009295">
    <property type="term" value="C:nucleoid"/>
    <property type="evidence" value="ECO:0007669"/>
    <property type="project" value="UniProtKB-SubCell"/>
</dbReference>
<dbReference type="GO" id="GO:0006260">
    <property type="term" value="P:DNA replication"/>
    <property type="evidence" value="ECO:0007669"/>
    <property type="project" value="UniProtKB-UniRule"/>
</dbReference>
<dbReference type="HAMAP" id="MF_01159">
    <property type="entry name" value="YabA"/>
    <property type="match status" value="1"/>
</dbReference>
<dbReference type="InterPro" id="IPR010377">
    <property type="entry name" value="YabA"/>
</dbReference>
<dbReference type="NCBIfam" id="NF009640">
    <property type="entry name" value="PRK13169.1-1"/>
    <property type="match status" value="1"/>
</dbReference>
<dbReference type="Pfam" id="PF06156">
    <property type="entry name" value="YabA"/>
    <property type="match status" value="1"/>
</dbReference>
<dbReference type="PIRSF" id="PIRSF021439">
    <property type="entry name" value="DUF972"/>
    <property type="match status" value="1"/>
</dbReference>
<proteinExistence type="inferred from homology"/>
<sequence>MNKKELFDAFDGFSQNLMVTLAEIEAMKKQVQSLVEENTILRLENTKLRERLSHLEHETAAKNPSKQRKDHLEGIYDEGFHICNFFYGQRRENDEECMFCRELLDRK</sequence>
<organism>
    <name type="scientific">Streptococcus pyogenes serotype M3 (strain SSI-1)</name>
    <dbReference type="NCBI Taxonomy" id="193567"/>
    <lineage>
        <taxon>Bacteria</taxon>
        <taxon>Bacillati</taxon>
        <taxon>Bacillota</taxon>
        <taxon>Bacilli</taxon>
        <taxon>Lactobacillales</taxon>
        <taxon>Streptococcaceae</taxon>
        <taxon>Streptococcus</taxon>
    </lineage>
</organism>
<accession>P0DH55</accession>
<accession>Q878C1</accession>
<accession>Q8K8H2</accession>
<evidence type="ECO:0000255" key="1">
    <source>
        <dbReference type="HAMAP-Rule" id="MF_01159"/>
    </source>
</evidence>
<evidence type="ECO:0000305" key="2"/>
<comment type="function">
    <text evidence="1">Involved in control of chromosome replication initiation. Inhibits the cooperative binding of DnaA to the oriC region, thus negatively regulating initiation of chromosome replication. Inhibits the ability of DnaA-ATP to form a helix on DNA; does not disassemble preformed DnaA-DNA helices. Decreases the residence time of DnaA on the chromosome at its binding sites (oriC, replication forks and promoter-binding sites). Tethers DnaA to the replication machinery via the DNA polymerase beta sliding clamp subunit (dnaN). Associates with oriC and other DnaA targets on the chromosome in a DnaA-dependent manner.</text>
</comment>
<comment type="cofactor">
    <cofactor evidence="1">
        <name>Zn(2+)</name>
        <dbReference type="ChEBI" id="CHEBI:29105"/>
    </cofactor>
    <text evidence="1">Binds 1 zinc ion per subunit.</text>
</comment>
<comment type="subunit">
    <text evidence="1">Homotetramer. Interacts with both DnaA and DnaN, acting as a bridge between these two proteins.</text>
</comment>
<comment type="subcellular location">
    <subcellularLocation>
        <location evidence="1">Cytoplasm</location>
        <location evidence="1">Nucleoid</location>
    </subcellularLocation>
    <text evidence="1">Localizes in tight foci, which correspond to the replisome at mid-cell throughout the cell cycle.</text>
</comment>
<comment type="similarity">
    <text evidence="1">Belongs to the YabA family.</text>
</comment>
<comment type="sequence caution" evidence="2">
    <conflict type="erroneous initiation">
        <sequence resource="EMBL-CDS" id="BAC64661"/>
    </conflict>
</comment>
<keyword id="KW-0963">Cytoplasm</keyword>
<keyword id="KW-0235">DNA replication</keyword>
<keyword id="KW-0236">DNA replication inhibitor</keyword>
<keyword id="KW-0479">Metal-binding</keyword>
<keyword id="KW-0862">Zinc</keyword>
<feature type="chain" id="PRO_0000411667" description="Replication initiation control protein YabA">
    <location>
        <begin position="1"/>
        <end position="107"/>
    </location>
</feature>
<feature type="binding site" evidence="1">
    <location>
        <position position="81"/>
    </location>
    <ligand>
        <name>Zn(2+)</name>
        <dbReference type="ChEBI" id="CHEBI:29105"/>
    </ligand>
</feature>
<feature type="binding site" evidence="1">
    <location>
        <position position="83"/>
    </location>
    <ligand>
        <name>Zn(2+)</name>
        <dbReference type="ChEBI" id="CHEBI:29105"/>
    </ligand>
</feature>
<feature type="binding site" evidence="1">
    <location>
        <position position="97"/>
    </location>
    <ligand>
        <name>Zn(2+)</name>
        <dbReference type="ChEBI" id="CHEBI:29105"/>
    </ligand>
</feature>
<feature type="binding site" evidence="1">
    <location>
        <position position="100"/>
    </location>
    <ligand>
        <name>Zn(2+)</name>
        <dbReference type="ChEBI" id="CHEBI:29105"/>
    </ligand>
</feature>